<dbReference type="EC" id="2.7.4.3" evidence="1"/>
<dbReference type="EMBL" id="CP001402">
    <property type="protein sequence ID" value="ACR42044.1"/>
    <property type="molecule type" value="Genomic_DNA"/>
</dbReference>
<dbReference type="RefSeq" id="WP_012711442.1">
    <property type="nucleotide sequence ID" value="NC_012726.1"/>
</dbReference>
<dbReference type="SMR" id="C4KHI0"/>
<dbReference type="KEGG" id="sid:M164_1438"/>
<dbReference type="HOGENOM" id="CLU_119371_0_0_2"/>
<dbReference type="Proteomes" id="UP000001479">
    <property type="component" value="Chromosome"/>
</dbReference>
<dbReference type="GO" id="GO:0005737">
    <property type="term" value="C:cytoplasm"/>
    <property type="evidence" value="ECO:0007669"/>
    <property type="project" value="UniProtKB-SubCell"/>
</dbReference>
<dbReference type="GO" id="GO:0004017">
    <property type="term" value="F:adenylate kinase activity"/>
    <property type="evidence" value="ECO:0007669"/>
    <property type="project" value="UniProtKB-UniRule"/>
</dbReference>
<dbReference type="GO" id="GO:0005524">
    <property type="term" value="F:ATP binding"/>
    <property type="evidence" value="ECO:0007669"/>
    <property type="project" value="UniProtKB-UniRule"/>
</dbReference>
<dbReference type="Gene3D" id="3.40.50.300">
    <property type="entry name" value="P-loop containing nucleotide triphosphate hydrolases"/>
    <property type="match status" value="1"/>
</dbReference>
<dbReference type="HAMAP" id="MF_00234">
    <property type="entry name" value="Adenylate_kinase_AdkA"/>
    <property type="match status" value="1"/>
</dbReference>
<dbReference type="InterPro" id="IPR023477">
    <property type="entry name" value="Adenylate_kinase_AdkA"/>
</dbReference>
<dbReference type="InterPro" id="IPR027417">
    <property type="entry name" value="P-loop_NTPase"/>
</dbReference>
<dbReference type="NCBIfam" id="NF003122">
    <property type="entry name" value="PRK04040.1"/>
    <property type="match status" value="1"/>
</dbReference>
<dbReference type="Pfam" id="PF13207">
    <property type="entry name" value="AAA_17"/>
    <property type="match status" value="1"/>
</dbReference>
<dbReference type="SUPFAM" id="SSF52540">
    <property type="entry name" value="P-loop containing nucleoside triphosphate hydrolases"/>
    <property type="match status" value="1"/>
</dbReference>
<keyword id="KW-0067">ATP-binding</keyword>
<keyword id="KW-0963">Cytoplasm</keyword>
<keyword id="KW-0418">Kinase</keyword>
<keyword id="KW-0547">Nucleotide-binding</keyword>
<keyword id="KW-0808">Transferase</keyword>
<sequence>MKIGIVTGIPGVGKTTVLSFADKILTEKGIPHKIANYGDYMLNTALKEGYVNSRDEIRKLQIEKQRELQALAARRIVEDLSLLGDEGIGLIDTHAVIRTPAGYLPGLPRHVIEVLSPKVIFLLEADPRIILERQKRDNSRARADYSDTTVINEVIQFARYSAMASAVLVGASVKVVINQEGDPSIAASDIINSLM</sequence>
<name>KADA_SACI6</name>
<accession>C4KHI0</accession>
<reference key="1">
    <citation type="journal article" date="2009" name="Proc. Natl. Acad. Sci. U.S.A.">
        <title>Biogeography of the Sulfolobus islandicus pan-genome.</title>
        <authorList>
            <person name="Reno M.L."/>
            <person name="Held N.L."/>
            <person name="Fields C.J."/>
            <person name="Burke P.V."/>
            <person name="Whitaker R.J."/>
        </authorList>
    </citation>
    <scope>NUCLEOTIDE SEQUENCE [LARGE SCALE GENOMIC DNA]</scope>
    <source>
        <strain>M.16.4 / Kamchatka #3</strain>
    </source>
</reference>
<protein>
    <recommendedName>
        <fullName evidence="1">Adenylate kinase</fullName>
        <shortName evidence="1">AK</shortName>
        <ecNumber evidence="1">2.7.4.3</ecNumber>
    </recommendedName>
    <alternativeName>
        <fullName evidence="1">ATP-AMP transphosphorylase</fullName>
    </alternativeName>
</protein>
<proteinExistence type="inferred from homology"/>
<feature type="chain" id="PRO_1000204391" description="Adenylate kinase">
    <location>
        <begin position="1"/>
        <end position="195"/>
    </location>
</feature>
<feature type="binding site" evidence="1">
    <location>
        <begin position="8"/>
        <end position="16"/>
    </location>
    <ligand>
        <name>ATP</name>
        <dbReference type="ChEBI" id="CHEBI:30616"/>
    </ligand>
</feature>
<gene>
    <name evidence="1" type="primary">adkA</name>
    <name type="ordered locus">M164_1438</name>
</gene>
<evidence type="ECO:0000255" key="1">
    <source>
        <dbReference type="HAMAP-Rule" id="MF_00234"/>
    </source>
</evidence>
<organism>
    <name type="scientific">Saccharolobus islandicus (strain M.16.4 / Kamchatka #3)</name>
    <name type="common">Sulfolobus islandicus</name>
    <dbReference type="NCBI Taxonomy" id="426118"/>
    <lineage>
        <taxon>Archaea</taxon>
        <taxon>Thermoproteota</taxon>
        <taxon>Thermoprotei</taxon>
        <taxon>Sulfolobales</taxon>
        <taxon>Sulfolobaceae</taxon>
        <taxon>Saccharolobus</taxon>
    </lineage>
</organism>
<comment type="catalytic activity">
    <reaction evidence="1">
        <text>AMP + ATP = 2 ADP</text>
        <dbReference type="Rhea" id="RHEA:12973"/>
        <dbReference type="ChEBI" id="CHEBI:30616"/>
        <dbReference type="ChEBI" id="CHEBI:456215"/>
        <dbReference type="ChEBI" id="CHEBI:456216"/>
        <dbReference type="EC" id="2.7.4.3"/>
    </reaction>
</comment>
<comment type="subcellular location">
    <subcellularLocation>
        <location evidence="1">Cytoplasm</location>
    </subcellularLocation>
</comment>
<comment type="similarity">
    <text evidence="1">Belongs to the archaeal adenylate kinase family.</text>
</comment>